<evidence type="ECO:0000255" key="1">
    <source>
        <dbReference type="HAMAP-Rule" id="MF_00179"/>
    </source>
</evidence>
<dbReference type="EC" id="3.5.4.25" evidence="1"/>
<dbReference type="EMBL" id="CP000563">
    <property type="protein sequence ID" value="ABN61180.1"/>
    <property type="molecule type" value="Genomic_DNA"/>
</dbReference>
<dbReference type="RefSeq" id="WP_011846503.1">
    <property type="nucleotide sequence ID" value="NC_009052.1"/>
</dbReference>
<dbReference type="SMR" id="A3D367"/>
<dbReference type="STRING" id="325240.Sbal_1668"/>
<dbReference type="KEGG" id="sbl:Sbal_1668"/>
<dbReference type="HOGENOM" id="CLU_020273_2_1_6"/>
<dbReference type="OrthoDB" id="9793111at2"/>
<dbReference type="UniPathway" id="UPA00275">
    <property type="reaction ID" value="UER00400"/>
</dbReference>
<dbReference type="Proteomes" id="UP000001557">
    <property type="component" value="Chromosome"/>
</dbReference>
<dbReference type="GO" id="GO:0005829">
    <property type="term" value="C:cytosol"/>
    <property type="evidence" value="ECO:0007669"/>
    <property type="project" value="TreeGrafter"/>
</dbReference>
<dbReference type="GO" id="GO:0005525">
    <property type="term" value="F:GTP binding"/>
    <property type="evidence" value="ECO:0007669"/>
    <property type="project" value="UniProtKB-KW"/>
</dbReference>
<dbReference type="GO" id="GO:0003935">
    <property type="term" value="F:GTP cyclohydrolase II activity"/>
    <property type="evidence" value="ECO:0007669"/>
    <property type="project" value="UniProtKB-UniRule"/>
</dbReference>
<dbReference type="GO" id="GO:0008270">
    <property type="term" value="F:zinc ion binding"/>
    <property type="evidence" value="ECO:0007669"/>
    <property type="project" value="UniProtKB-UniRule"/>
</dbReference>
<dbReference type="GO" id="GO:0009231">
    <property type="term" value="P:riboflavin biosynthetic process"/>
    <property type="evidence" value="ECO:0007669"/>
    <property type="project" value="UniProtKB-UniRule"/>
</dbReference>
<dbReference type="CDD" id="cd00641">
    <property type="entry name" value="GTP_cyclohydro2"/>
    <property type="match status" value="1"/>
</dbReference>
<dbReference type="FunFam" id="3.40.50.10990:FF:000002">
    <property type="entry name" value="GTP cyclohydrolase-2"/>
    <property type="match status" value="1"/>
</dbReference>
<dbReference type="Gene3D" id="3.40.50.10990">
    <property type="entry name" value="GTP cyclohydrolase II"/>
    <property type="match status" value="1"/>
</dbReference>
<dbReference type="HAMAP" id="MF_00179">
    <property type="entry name" value="RibA"/>
    <property type="match status" value="1"/>
</dbReference>
<dbReference type="InterPro" id="IPR032677">
    <property type="entry name" value="GTP_cyclohydro_II"/>
</dbReference>
<dbReference type="InterPro" id="IPR000926">
    <property type="entry name" value="RibA"/>
</dbReference>
<dbReference type="InterPro" id="IPR036144">
    <property type="entry name" value="RibA-like_sf"/>
</dbReference>
<dbReference type="NCBIfam" id="NF001591">
    <property type="entry name" value="PRK00393.1"/>
    <property type="match status" value="1"/>
</dbReference>
<dbReference type="NCBIfam" id="TIGR00505">
    <property type="entry name" value="ribA"/>
    <property type="match status" value="1"/>
</dbReference>
<dbReference type="PANTHER" id="PTHR21327:SF18">
    <property type="entry name" value="3,4-DIHYDROXY-2-BUTANONE 4-PHOSPHATE SYNTHASE"/>
    <property type="match status" value="1"/>
</dbReference>
<dbReference type="PANTHER" id="PTHR21327">
    <property type="entry name" value="GTP CYCLOHYDROLASE II-RELATED"/>
    <property type="match status" value="1"/>
</dbReference>
<dbReference type="Pfam" id="PF00925">
    <property type="entry name" value="GTP_cyclohydro2"/>
    <property type="match status" value="1"/>
</dbReference>
<dbReference type="SUPFAM" id="SSF142695">
    <property type="entry name" value="RibA-like"/>
    <property type="match status" value="1"/>
</dbReference>
<keyword id="KW-0342">GTP-binding</keyword>
<keyword id="KW-0378">Hydrolase</keyword>
<keyword id="KW-0479">Metal-binding</keyword>
<keyword id="KW-0547">Nucleotide-binding</keyword>
<keyword id="KW-1185">Reference proteome</keyword>
<keyword id="KW-0686">Riboflavin biosynthesis</keyword>
<keyword id="KW-0862">Zinc</keyword>
<name>RIBA_SHEB5</name>
<feature type="chain" id="PRO_1000040579" description="GTP cyclohydrolase-2">
    <location>
        <begin position="1"/>
        <end position="204"/>
    </location>
</feature>
<feature type="active site" description="Proton acceptor" evidence="1">
    <location>
        <position position="126"/>
    </location>
</feature>
<feature type="active site" description="Nucleophile" evidence="1">
    <location>
        <position position="128"/>
    </location>
</feature>
<feature type="binding site" evidence="1">
    <location>
        <begin position="49"/>
        <end position="53"/>
    </location>
    <ligand>
        <name>GTP</name>
        <dbReference type="ChEBI" id="CHEBI:37565"/>
    </ligand>
</feature>
<feature type="binding site" evidence="1">
    <location>
        <position position="54"/>
    </location>
    <ligand>
        <name>Zn(2+)</name>
        <dbReference type="ChEBI" id="CHEBI:29105"/>
        <note>catalytic</note>
    </ligand>
</feature>
<feature type="binding site" evidence="1">
    <location>
        <position position="65"/>
    </location>
    <ligand>
        <name>Zn(2+)</name>
        <dbReference type="ChEBI" id="CHEBI:29105"/>
        <note>catalytic</note>
    </ligand>
</feature>
<feature type="binding site" evidence="1">
    <location>
        <position position="67"/>
    </location>
    <ligand>
        <name>Zn(2+)</name>
        <dbReference type="ChEBI" id="CHEBI:29105"/>
        <note>catalytic</note>
    </ligand>
</feature>
<feature type="binding site" evidence="1">
    <location>
        <position position="70"/>
    </location>
    <ligand>
        <name>GTP</name>
        <dbReference type="ChEBI" id="CHEBI:37565"/>
    </ligand>
</feature>
<feature type="binding site" evidence="1">
    <location>
        <begin position="92"/>
        <end position="94"/>
    </location>
    <ligand>
        <name>GTP</name>
        <dbReference type="ChEBI" id="CHEBI:37565"/>
    </ligand>
</feature>
<feature type="binding site" evidence="1">
    <location>
        <position position="114"/>
    </location>
    <ligand>
        <name>GTP</name>
        <dbReference type="ChEBI" id="CHEBI:37565"/>
    </ligand>
</feature>
<feature type="binding site" evidence="1">
    <location>
        <position position="149"/>
    </location>
    <ligand>
        <name>GTP</name>
        <dbReference type="ChEBI" id="CHEBI:37565"/>
    </ligand>
</feature>
<feature type="binding site" evidence="1">
    <location>
        <position position="154"/>
    </location>
    <ligand>
        <name>GTP</name>
        <dbReference type="ChEBI" id="CHEBI:37565"/>
    </ligand>
</feature>
<comment type="function">
    <text evidence="1">Catalyzes the conversion of GTP to 2,5-diamino-6-ribosylamino-4(3H)-pyrimidinone 5'-phosphate (DARP), formate and pyrophosphate.</text>
</comment>
<comment type="catalytic activity">
    <reaction evidence="1">
        <text>GTP + 4 H2O = 2,5-diamino-6-hydroxy-4-(5-phosphoribosylamino)-pyrimidine + formate + 2 phosphate + 3 H(+)</text>
        <dbReference type="Rhea" id="RHEA:23704"/>
        <dbReference type="ChEBI" id="CHEBI:15377"/>
        <dbReference type="ChEBI" id="CHEBI:15378"/>
        <dbReference type="ChEBI" id="CHEBI:15740"/>
        <dbReference type="ChEBI" id="CHEBI:37565"/>
        <dbReference type="ChEBI" id="CHEBI:43474"/>
        <dbReference type="ChEBI" id="CHEBI:58614"/>
        <dbReference type="EC" id="3.5.4.25"/>
    </reaction>
</comment>
<comment type="cofactor">
    <cofactor evidence="1">
        <name>Zn(2+)</name>
        <dbReference type="ChEBI" id="CHEBI:29105"/>
    </cofactor>
    <text evidence="1">Binds 1 zinc ion per subunit.</text>
</comment>
<comment type="pathway">
    <text evidence="1">Cofactor biosynthesis; riboflavin biosynthesis; 5-amino-6-(D-ribitylamino)uracil from GTP: step 1/4.</text>
</comment>
<comment type="similarity">
    <text evidence="1">Belongs to the GTP cyclohydrolase II family.</text>
</comment>
<proteinExistence type="inferred from homology"/>
<reference key="1">
    <citation type="submission" date="2007-02" db="EMBL/GenBank/DDBJ databases">
        <title>Complete sequence of chromosome of Shewanella baltica OS155.</title>
        <authorList>
            <consortium name="US DOE Joint Genome Institute"/>
            <person name="Copeland A."/>
            <person name="Lucas S."/>
            <person name="Lapidus A."/>
            <person name="Barry K."/>
            <person name="Detter J.C."/>
            <person name="Glavina del Rio T."/>
            <person name="Hammon N."/>
            <person name="Israni S."/>
            <person name="Dalin E."/>
            <person name="Tice H."/>
            <person name="Pitluck S."/>
            <person name="Sims D.R."/>
            <person name="Brettin T."/>
            <person name="Bruce D."/>
            <person name="Han C."/>
            <person name="Tapia R."/>
            <person name="Brainard J."/>
            <person name="Schmutz J."/>
            <person name="Larimer F."/>
            <person name="Land M."/>
            <person name="Hauser L."/>
            <person name="Kyrpides N."/>
            <person name="Mikhailova N."/>
            <person name="Brettar I."/>
            <person name="Klappenbach J."/>
            <person name="Konstantinidis K."/>
            <person name="Rodrigues J."/>
            <person name="Tiedje J."/>
            <person name="Richardson P."/>
        </authorList>
    </citation>
    <scope>NUCLEOTIDE SEQUENCE [LARGE SCALE GENOMIC DNA]</scope>
    <source>
        <strain>OS155 / ATCC BAA-1091</strain>
    </source>
</reference>
<accession>A3D367</accession>
<sequence>MSIKYVATSKLPTPWGVFAMHGFEDTESGKEHVALTFGTLSADEPVLGRIHSECLTGDALFSLRCDCGFQLQAAMQNIAETGSGFILYLRQEGRGIGLLNKIRAYELQDKGANTVEANEQLGFEADMRKYDMIKPILEQIGVKHVRLMTNNPRKVKAMKEFGIEVVERVPLQVGKNRYNEAYLKTKSTELGHMMSEYHFMDENK</sequence>
<organism>
    <name type="scientific">Shewanella baltica (strain OS155 / ATCC BAA-1091)</name>
    <dbReference type="NCBI Taxonomy" id="325240"/>
    <lineage>
        <taxon>Bacteria</taxon>
        <taxon>Pseudomonadati</taxon>
        <taxon>Pseudomonadota</taxon>
        <taxon>Gammaproteobacteria</taxon>
        <taxon>Alteromonadales</taxon>
        <taxon>Shewanellaceae</taxon>
        <taxon>Shewanella</taxon>
    </lineage>
</organism>
<gene>
    <name evidence="1" type="primary">ribA</name>
    <name type="ordered locus">Sbal_1668</name>
</gene>
<protein>
    <recommendedName>
        <fullName evidence="1">GTP cyclohydrolase-2</fullName>
        <ecNumber evidence="1">3.5.4.25</ecNumber>
    </recommendedName>
    <alternativeName>
        <fullName evidence="1">GTP cyclohydrolase II</fullName>
    </alternativeName>
</protein>